<protein>
    <recommendedName>
        <fullName evidence="1">Large ribosomal subunit protein eL32</fullName>
    </recommendedName>
    <alternativeName>
        <fullName>60S ribosomal protein L32</fullName>
    </alternativeName>
    <alternativeName>
        <fullName>Ribosomal protein 49</fullName>
    </alternativeName>
</protein>
<organism>
    <name type="scientific">Drosophila yakuba</name>
    <name type="common">Fruit fly</name>
    <dbReference type="NCBI Taxonomy" id="7245"/>
    <lineage>
        <taxon>Eukaryota</taxon>
        <taxon>Metazoa</taxon>
        <taxon>Ecdysozoa</taxon>
        <taxon>Arthropoda</taxon>
        <taxon>Hexapoda</taxon>
        <taxon>Insecta</taxon>
        <taxon>Pterygota</taxon>
        <taxon>Neoptera</taxon>
        <taxon>Endopterygota</taxon>
        <taxon>Diptera</taxon>
        <taxon>Brachycera</taxon>
        <taxon>Muscomorpha</taxon>
        <taxon>Ephydroidea</taxon>
        <taxon>Drosophilidae</taxon>
        <taxon>Drosophila</taxon>
        <taxon>Sophophora</taxon>
    </lineage>
</organism>
<reference key="1">
    <citation type="journal article" date="2003" name="Genome Res.">
        <title>An evolutionary analysis of orphan genes in Drosophila.</title>
        <authorList>
            <person name="Domazet-Loso T."/>
            <person name="Tautz D."/>
        </authorList>
    </citation>
    <scope>NUCLEOTIDE SEQUENCE [MRNA]</scope>
</reference>
<reference key="2">
    <citation type="journal article" date="2007" name="Nature">
        <title>Evolution of genes and genomes on the Drosophila phylogeny.</title>
        <authorList>
            <consortium name="Drosophila 12 genomes consortium"/>
        </authorList>
    </citation>
    <scope>NUCLEOTIDE SEQUENCE [LARGE SCALE GENOMIC DNA]</scope>
    <source>
        <strain>Tai18E2 / Tucson 14021-0261.01</strain>
    </source>
</reference>
<evidence type="ECO:0000305" key="1"/>
<sequence>MTIRPAYRPKIVKKRTKHFIRHQSDRYAKLSHKWRKPKGIDNRVRRRFKGQYLMPNIGYGSNKRTRHMLPTGFKKFLVHNVRELEVLLMQNRVYCGEIAHGVSSKKRKEIVERAKQLSVRLTNPNGRLRSQENE</sequence>
<gene>
    <name type="primary">RpL32</name>
    <name type="synonym">M(3)99D</name>
    <name type="synonym">rp49</name>
    <name type="ORF">GE23418</name>
</gene>
<comment type="similarity">
    <text evidence="1">Belongs to the eukaryotic ribosomal protein eL32 family.</text>
</comment>
<keyword id="KW-0687">Ribonucleoprotein</keyword>
<keyword id="KW-0689">Ribosomal protein</keyword>
<feature type="chain" id="PRO_0000131134" description="Large ribosomal subunit protein eL32">
    <location>
        <begin position="1"/>
        <end position="134"/>
    </location>
</feature>
<dbReference type="EMBL" id="AY231887">
    <property type="protein sequence ID" value="AAR09910.1"/>
    <property type="molecule type" value="mRNA"/>
</dbReference>
<dbReference type="EMBL" id="AY232069">
    <property type="protein sequence ID" value="AAR10092.1"/>
    <property type="molecule type" value="mRNA"/>
</dbReference>
<dbReference type="EMBL" id="CM000160">
    <property type="protein sequence ID" value="EDW99054.1"/>
    <property type="molecule type" value="Genomic_DNA"/>
</dbReference>
<dbReference type="RefSeq" id="XP_002099342.1">
    <property type="nucleotide sequence ID" value="XM_002099306.2"/>
</dbReference>
<dbReference type="SMR" id="P61127"/>
<dbReference type="EnsemblMetazoa" id="FBtr0269936">
    <property type="protein sequence ID" value="FBpp0268428"/>
    <property type="gene ID" value="FBgn0068070"/>
</dbReference>
<dbReference type="EnsemblMetazoa" id="FBtr0393502">
    <property type="protein sequence ID" value="FBpp0352880"/>
    <property type="gene ID" value="FBgn0068070"/>
</dbReference>
<dbReference type="EnsemblMetazoa" id="FBtr0400761">
    <property type="protein sequence ID" value="FBpp0359715"/>
    <property type="gene ID" value="FBgn0068070"/>
</dbReference>
<dbReference type="EnsemblMetazoa" id="XM_015193578.3">
    <property type="protein sequence ID" value="XP_015049064.1"/>
    <property type="gene ID" value="LOC6538829"/>
</dbReference>
<dbReference type="EnsemblMetazoa" id="XM_015193579.3">
    <property type="protein sequence ID" value="XP_015049065.1"/>
    <property type="gene ID" value="LOC6538829"/>
</dbReference>
<dbReference type="GeneID" id="6538829"/>
<dbReference type="KEGG" id="dya:Dyak_GE23418"/>
<dbReference type="CTD" id="6161"/>
<dbReference type="eggNOG" id="KOG0878">
    <property type="taxonomic scope" value="Eukaryota"/>
</dbReference>
<dbReference type="HOGENOM" id="CLU_071479_4_1_1"/>
<dbReference type="OMA" id="HPSGYEE"/>
<dbReference type="OrthoDB" id="268693at2759"/>
<dbReference type="PhylomeDB" id="P61127"/>
<dbReference type="ChiTaRS" id="RpL32">
    <property type="organism name" value="fly"/>
</dbReference>
<dbReference type="Proteomes" id="UP000002282">
    <property type="component" value="Chromosome 3R"/>
</dbReference>
<dbReference type="GO" id="GO:0022625">
    <property type="term" value="C:cytosolic large ribosomal subunit"/>
    <property type="evidence" value="ECO:0007669"/>
    <property type="project" value="TreeGrafter"/>
</dbReference>
<dbReference type="GO" id="GO:0003735">
    <property type="term" value="F:structural constituent of ribosome"/>
    <property type="evidence" value="ECO:0007669"/>
    <property type="project" value="InterPro"/>
</dbReference>
<dbReference type="GO" id="GO:0006412">
    <property type="term" value="P:translation"/>
    <property type="evidence" value="ECO:0007669"/>
    <property type="project" value="InterPro"/>
</dbReference>
<dbReference type="CDD" id="cd00513">
    <property type="entry name" value="Ribosomal_L32_L32e"/>
    <property type="match status" value="1"/>
</dbReference>
<dbReference type="InterPro" id="IPR001515">
    <property type="entry name" value="Ribosomal_eL32"/>
</dbReference>
<dbReference type="InterPro" id="IPR018263">
    <property type="entry name" value="Ribosomal_eL32_CS"/>
</dbReference>
<dbReference type="InterPro" id="IPR036351">
    <property type="entry name" value="Ribosomal_eL32_sf"/>
</dbReference>
<dbReference type="PANTHER" id="PTHR23413">
    <property type="entry name" value="60S RIBOSOMAL PROTEIN L32 AND DNA-DIRECTED RNA POLYMERASE II, SUBUNIT N"/>
    <property type="match status" value="1"/>
</dbReference>
<dbReference type="PANTHER" id="PTHR23413:SF1">
    <property type="entry name" value="RIBOSOMAL PROTEIN L32"/>
    <property type="match status" value="1"/>
</dbReference>
<dbReference type="Pfam" id="PF01655">
    <property type="entry name" value="Ribosomal_L32e"/>
    <property type="match status" value="1"/>
</dbReference>
<dbReference type="SMART" id="SM01393">
    <property type="entry name" value="Ribosomal_L32e"/>
    <property type="match status" value="1"/>
</dbReference>
<dbReference type="SUPFAM" id="SSF52042">
    <property type="entry name" value="Ribosomal protein L32e"/>
    <property type="match status" value="1"/>
</dbReference>
<dbReference type="PROSITE" id="PS00580">
    <property type="entry name" value="RIBOSOMAL_L32E"/>
    <property type="match status" value="1"/>
</dbReference>
<proteinExistence type="evidence at transcript level"/>
<name>RL32_DROYA</name>
<accession>P61127</accession>
<accession>B4PLR7</accession>